<comment type="function">
    <text evidence="7 9 10 13 14">Myosins are actin-based motor molecules with ATPase activity. Their highly divergent tails are presumed to bind to membranous compartments, which would be moved relative to actin filaments. As part of the intermicrovillar adhesion complex/IMAC plays a role in epithelial brush border differentiation, controlling microvilli organization and length (PubMed:24725409, PubMed:26812018, PubMed:32209652). May link the complex to the actin core bundle of microvilli.</text>
</comment>
<comment type="subunit">
    <text evidence="7 8 9 10">Part of the IMAC/intermicrovillar adhesion complex/intermicrovillar tip-link complex composed of ANKS4B, MYO7B, USH1C, CDHR2 and CDHR5 (PubMed:24725409, PubMed:26812018, PubMed:32209652). Interacts with CDHR2 (PubMed:24725409). Interacts with CDHR5 (PubMed:24725409). Interacts with USH1C (PubMed:24725409, PubMed:26812017, PubMed:26812018). Interacts with ANKS4B; requires initial interaction with USH1C (PubMed:26812018). Interacts with CALML4; the interaction mediates the association of CALML4 with the IMAC/intermicrovillar adhesion complex (PubMed:32209652).</text>
</comment>
<comment type="interaction">
    <interactant intactId="EBI-4400912">
        <id>Q6PIF6</id>
    </interactant>
    <interactant intactId="EBI-493793">
        <id>Q9BYE9</id>
        <label>CDHR2</label>
    </interactant>
    <organismsDiffer>false</organismsDiffer>
    <experiments>3</experiments>
</comment>
<comment type="subcellular location">
    <subcellularLocation>
        <location evidence="12">Cytoplasm</location>
        <location evidence="12">Cytoskeleton</location>
    </subcellularLocation>
    <subcellularLocation>
        <location evidence="7 10">Cell projection</location>
        <location evidence="7 10">Microvillus</location>
    </subcellularLocation>
    <text evidence="7 10">Enriched in the microvilli of the intestinal brush border.</text>
</comment>
<comment type="alternative products">
    <event type="alternative splicing"/>
    <isoform>
        <id>Q6PIF6-1</id>
        <name>1</name>
        <sequence type="displayed"/>
    </isoform>
    <isoform>
        <id>Q6PIF6-2</id>
        <name>2</name>
        <sequence type="described" ref="VSP_032930 VSP_032931"/>
    </isoform>
</comment>
<comment type="similarity">
    <text evidence="12">Belongs to the TRAFAC class myosin-kinesin ATPase superfamily. Myosin family.</text>
</comment>
<comment type="caution">
    <text evidence="12">Represents an unconventional myosin. This protein should not be confused with the conventional myosin-7 (MYH7).</text>
</comment>
<comment type="sequence caution" evidence="12">
    <conflict type="erroneous initiation">
        <sequence resource="EMBL-CDS" id="AAH35615"/>
    </conflict>
    <text>Extended N-terminus.</text>
</comment>
<dbReference type="EMBL" id="AC010976">
    <property type="status" value="NOT_ANNOTATED_CDS"/>
    <property type="molecule type" value="Genomic_DNA"/>
</dbReference>
<dbReference type="EMBL" id="L29147">
    <property type="protein sequence ID" value="AAA20910.1"/>
    <property type="molecule type" value="mRNA"/>
</dbReference>
<dbReference type="EMBL" id="AK074183">
    <property type="protein sequence ID" value="BAB85009.1"/>
    <property type="molecule type" value="mRNA"/>
</dbReference>
<dbReference type="EMBL" id="BC035615">
    <property type="protein sequence ID" value="AAH35615.2"/>
    <property type="status" value="ALT_INIT"/>
    <property type="molecule type" value="mRNA"/>
</dbReference>
<dbReference type="CCDS" id="CCDS46405.1">
    <molecule id="Q6PIF6-1"/>
</dbReference>
<dbReference type="RefSeq" id="NP_001073996.1">
    <molecule id="Q6PIF6-1"/>
    <property type="nucleotide sequence ID" value="NM_001080527.2"/>
</dbReference>
<dbReference type="PDB" id="5MV7">
    <property type="method" value="X-ray"/>
    <property type="resolution" value="2.44 A"/>
    <property type="chains" value="A=1605-2116"/>
</dbReference>
<dbReference type="PDB" id="5MV8">
    <property type="method" value="X-ray"/>
    <property type="resolution" value="1.88 A"/>
    <property type="chains" value="A=1609-2116"/>
</dbReference>
<dbReference type="PDB" id="5XBF">
    <property type="method" value="X-ray"/>
    <property type="resolution" value="1.80 A"/>
    <property type="chains" value="A=1601-2116"/>
</dbReference>
<dbReference type="PDBsum" id="5MV7"/>
<dbReference type="PDBsum" id="5MV8"/>
<dbReference type="PDBsum" id="5XBF"/>
<dbReference type="SMR" id="Q6PIF6"/>
<dbReference type="BioGRID" id="110732">
    <property type="interactions" value="2"/>
</dbReference>
<dbReference type="FunCoup" id="Q6PIF6">
    <property type="interactions" value="12"/>
</dbReference>
<dbReference type="IntAct" id="Q6PIF6">
    <property type="interactions" value="4"/>
</dbReference>
<dbReference type="STRING" id="9606.ENSP00000415090"/>
<dbReference type="GlyGen" id="Q6PIF6">
    <property type="glycosylation" value="3 sites, 2 N-linked glycans (2 sites), 1 O-linked glycan (1 site)"/>
</dbReference>
<dbReference type="iPTMnet" id="Q6PIF6"/>
<dbReference type="PhosphoSitePlus" id="Q6PIF6"/>
<dbReference type="BioMuta" id="MYO7B"/>
<dbReference type="DMDM" id="182667924"/>
<dbReference type="jPOST" id="Q6PIF6"/>
<dbReference type="MassIVE" id="Q6PIF6"/>
<dbReference type="PaxDb" id="9606-ENSP00000415090"/>
<dbReference type="PeptideAtlas" id="Q6PIF6"/>
<dbReference type="ProteomicsDB" id="67155">
    <molecule id="Q6PIF6-1"/>
</dbReference>
<dbReference type="ProteomicsDB" id="67156">
    <molecule id="Q6PIF6-2"/>
</dbReference>
<dbReference type="Antibodypedia" id="47564">
    <property type="antibodies" value="26 antibodies from 16 providers"/>
</dbReference>
<dbReference type="DNASU" id="4648"/>
<dbReference type="Ensembl" id="ENST00000428314.5">
    <molecule id="Q6PIF6-1"/>
    <property type="protein sequence ID" value="ENSP00000415090.1"/>
    <property type="gene ID" value="ENSG00000169994.20"/>
</dbReference>
<dbReference type="GeneID" id="4648"/>
<dbReference type="KEGG" id="hsa:4648"/>
<dbReference type="UCSC" id="uc002top.3">
    <molecule id="Q6PIF6-1"/>
    <property type="organism name" value="human"/>
</dbReference>
<dbReference type="AGR" id="HGNC:7607"/>
<dbReference type="CTD" id="4648"/>
<dbReference type="DisGeNET" id="4648"/>
<dbReference type="GeneCards" id="MYO7B"/>
<dbReference type="HGNC" id="HGNC:7607">
    <property type="gene designation" value="MYO7B"/>
</dbReference>
<dbReference type="HPA" id="ENSG00000169994">
    <property type="expression patterns" value="Tissue enriched (intestine)"/>
</dbReference>
<dbReference type="MalaCards" id="MYO7B"/>
<dbReference type="MIM" id="606541">
    <property type="type" value="gene"/>
</dbReference>
<dbReference type="neXtProt" id="NX_Q6PIF6"/>
<dbReference type="OpenTargets" id="ENSG00000169994"/>
<dbReference type="PharmGKB" id="PA31412"/>
<dbReference type="VEuPathDB" id="HostDB:ENSG00000169994"/>
<dbReference type="eggNOG" id="KOG4229">
    <property type="taxonomic scope" value="Eukaryota"/>
</dbReference>
<dbReference type="GeneTree" id="ENSGT00940000157247"/>
<dbReference type="HOGENOM" id="CLU_000192_14_1_1"/>
<dbReference type="InParanoid" id="Q6PIF6"/>
<dbReference type="OMA" id="MYEKVWA"/>
<dbReference type="OrthoDB" id="6108017at2759"/>
<dbReference type="PAN-GO" id="Q6PIF6">
    <property type="GO annotations" value="10 GO annotations based on evolutionary models"/>
</dbReference>
<dbReference type="PhylomeDB" id="Q6PIF6"/>
<dbReference type="TreeFam" id="TF335306"/>
<dbReference type="PathwayCommons" id="Q6PIF6"/>
<dbReference type="SignaLink" id="Q6PIF6"/>
<dbReference type="BioGRID-ORCS" id="4648">
    <property type="hits" value="13 hits in 1148 CRISPR screens"/>
</dbReference>
<dbReference type="CD-CODE" id="F345034F">
    <property type="entry name" value="Signaling cluster"/>
</dbReference>
<dbReference type="ChiTaRS" id="MYO7B">
    <property type="organism name" value="human"/>
</dbReference>
<dbReference type="GenomeRNAi" id="4648"/>
<dbReference type="Pharos" id="Q6PIF6">
    <property type="development level" value="Tbio"/>
</dbReference>
<dbReference type="PRO" id="PR:Q6PIF6"/>
<dbReference type="Proteomes" id="UP000005640">
    <property type="component" value="Chromosome 2"/>
</dbReference>
<dbReference type="RNAct" id="Q6PIF6">
    <property type="molecule type" value="protein"/>
</dbReference>
<dbReference type="Bgee" id="ENSG00000169994">
    <property type="expression patterns" value="Expressed in ileal mucosa and 125 other cell types or tissues"/>
</dbReference>
<dbReference type="ExpressionAtlas" id="Q6PIF6">
    <property type="expression patterns" value="baseline and differential"/>
</dbReference>
<dbReference type="GO" id="GO:0015629">
    <property type="term" value="C:actin cytoskeleton"/>
    <property type="evidence" value="ECO:0000318"/>
    <property type="project" value="GO_Central"/>
</dbReference>
<dbReference type="GO" id="GO:0090651">
    <property type="term" value="C:apical cytoplasm"/>
    <property type="evidence" value="ECO:0000250"/>
    <property type="project" value="UniProtKB"/>
</dbReference>
<dbReference type="GO" id="GO:0005903">
    <property type="term" value="C:brush border"/>
    <property type="evidence" value="ECO:0000314"/>
    <property type="project" value="UniProtKB"/>
</dbReference>
<dbReference type="GO" id="GO:0005737">
    <property type="term" value="C:cytoplasm"/>
    <property type="evidence" value="ECO:0000318"/>
    <property type="project" value="GO_Central"/>
</dbReference>
<dbReference type="GO" id="GO:0016020">
    <property type="term" value="C:membrane"/>
    <property type="evidence" value="ECO:0000318"/>
    <property type="project" value="GO_Central"/>
</dbReference>
<dbReference type="GO" id="GO:0005902">
    <property type="term" value="C:microvillus"/>
    <property type="evidence" value="ECO:0000314"/>
    <property type="project" value="UniProtKB"/>
</dbReference>
<dbReference type="GO" id="GO:0016459">
    <property type="term" value="C:myosin complex"/>
    <property type="evidence" value="ECO:0007669"/>
    <property type="project" value="UniProtKB-KW"/>
</dbReference>
<dbReference type="GO" id="GO:0051015">
    <property type="term" value="F:actin filament binding"/>
    <property type="evidence" value="ECO:0000318"/>
    <property type="project" value="GO_Central"/>
</dbReference>
<dbReference type="GO" id="GO:0005524">
    <property type="term" value="F:ATP binding"/>
    <property type="evidence" value="ECO:0007669"/>
    <property type="project" value="UniProtKB-KW"/>
</dbReference>
<dbReference type="GO" id="GO:0000146">
    <property type="term" value="F:microfilament motor activity"/>
    <property type="evidence" value="ECO:0000318"/>
    <property type="project" value="GO_Central"/>
</dbReference>
<dbReference type="GO" id="GO:0007015">
    <property type="term" value="P:actin filament organization"/>
    <property type="evidence" value="ECO:0000318"/>
    <property type="project" value="GO_Central"/>
</dbReference>
<dbReference type="GO" id="GO:0030048">
    <property type="term" value="P:actin filament-based movement"/>
    <property type="evidence" value="ECO:0000318"/>
    <property type="project" value="GO_Central"/>
</dbReference>
<dbReference type="GO" id="GO:1904970">
    <property type="term" value="P:brush border assembly"/>
    <property type="evidence" value="ECO:0000314"/>
    <property type="project" value="UniProtKB"/>
</dbReference>
<dbReference type="GO" id="GO:0030154">
    <property type="term" value="P:cell differentiation"/>
    <property type="evidence" value="ECO:0007669"/>
    <property type="project" value="UniProtKB-KW"/>
</dbReference>
<dbReference type="GO" id="GO:0007605">
    <property type="term" value="P:sensory perception of sound"/>
    <property type="evidence" value="ECO:0000318"/>
    <property type="project" value="GO_Central"/>
</dbReference>
<dbReference type="CDD" id="cd17092">
    <property type="entry name" value="FERM1_F1_Myosin-VII"/>
    <property type="match status" value="1"/>
</dbReference>
<dbReference type="CDD" id="cd17093">
    <property type="entry name" value="FERM2_F1_Myosin-VII"/>
    <property type="match status" value="1"/>
</dbReference>
<dbReference type="CDD" id="cd14473">
    <property type="entry name" value="FERM_B-lobe"/>
    <property type="match status" value="1"/>
</dbReference>
<dbReference type="CDD" id="cd13198">
    <property type="entry name" value="FERM_C1_MyoVII"/>
    <property type="match status" value="1"/>
</dbReference>
<dbReference type="CDD" id="cd13199">
    <property type="entry name" value="FERM_C2_MyoVII"/>
    <property type="match status" value="1"/>
</dbReference>
<dbReference type="CDD" id="cd23767">
    <property type="entry name" value="IQCD"/>
    <property type="match status" value="1"/>
</dbReference>
<dbReference type="CDD" id="cd01381">
    <property type="entry name" value="MYSc_Myo7"/>
    <property type="match status" value="1"/>
</dbReference>
<dbReference type="FunFam" id="1.25.40.530:FF:000006">
    <property type="entry name" value="MYO7B isoform 7"/>
    <property type="match status" value="1"/>
</dbReference>
<dbReference type="FunFam" id="1.10.10.820:FF:000001">
    <property type="entry name" value="Myosin heavy chain"/>
    <property type="match status" value="1"/>
</dbReference>
<dbReference type="FunFam" id="1.20.80.10:FF:000012">
    <property type="entry name" value="Myosin VIIA"/>
    <property type="match status" value="1"/>
</dbReference>
<dbReference type="FunFam" id="1.20.5.190:FF:000050">
    <property type="entry name" value="Myosin VIIb"/>
    <property type="match status" value="1"/>
</dbReference>
<dbReference type="FunFam" id="2.30.30.40:FF:000235">
    <property type="entry name" value="Myosin VIIb"/>
    <property type="match status" value="1"/>
</dbReference>
<dbReference type="FunFam" id="3.40.850.10:FF:000008">
    <property type="entry name" value="Putative unconventional myosin-IXa"/>
    <property type="match status" value="1"/>
</dbReference>
<dbReference type="FunFam" id="1.20.80.10:FF:000013">
    <property type="entry name" value="Unconventional myosin-VIIa"/>
    <property type="match status" value="1"/>
</dbReference>
<dbReference type="FunFam" id="1.25.40.530:FF:000002">
    <property type="entry name" value="Unconventional myosin-VIIa"/>
    <property type="match status" value="1"/>
</dbReference>
<dbReference type="FunFam" id="2.30.29.30:FF:000075">
    <property type="entry name" value="unconventional myosin-VIIa"/>
    <property type="match status" value="1"/>
</dbReference>
<dbReference type="FunFam" id="2.30.29.30:FF:000079">
    <property type="entry name" value="unconventional myosin-VIIa"/>
    <property type="match status" value="1"/>
</dbReference>
<dbReference type="Gene3D" id="1.10.10.820">
    <property type="match status" value="1"/>
</dbReference>
<dbReference type="Gene3D" id="1.20.5.190">
    <property type="match status" value="2"/>
</dbReference>
<dbReference type="Gene3D" id="1.20.58.530">
    <property type="match status" value="1"/>
</dbReference>
<dbReference type="Gene3D" id="1.20.80.10">
    <property type="match status" value="2"/>
</dbReference>
<dbReference type="Gene3D" id="6.20.240.20">
    <property type="match status" value="1"/>
</dbReference>
<dbReference type="Gene3D" id="3.40.850.10">
    <property type="entry name" value="Kinesin motor domain"/>
    <property type="match status" value="1"/>
</dbReference>
<dbReference type="Gene3D" id="1.20.120.720">
    <property type="entry name" value="Myosin VI head, motor domain, U50 subdomain"/>
    <property type="match status" value="1"/>
</dbReference>
<dbReference type="Gene3D" id="1.25.40.530">
    <property type="entry name" value="MyTH4 domain"/>
    <property type="match status" value="3"/>
</dbReference>
<dbReference type="Gene3D" id="3.10.20.90">
    <property type="entry name" value="Phosphatidylinositol 3-kinase Catalytic Subunit, Chain A, domain 1"/>
    <property type="match status" value="2"/>
</dbReference>
<dbReference type="Gene3D" id="2.30.29.30">
    <property type="entry name" value="Pleckstrin-homology domain (PH domain)/Phosphotyrosine-binding domain (PTB)"/>
    <property type="match status" value="2"/>
</dbReference>
<dbReference type="Gene3D" id="2.30.30.40">
    <property type="entry name" value="SH3 Domains"/>
    <property type="match status" value="1"/>
</dbReference>
<dbReference type="InterPro" id="IPR019749">
    <property type="entry name" value="Band_41_domain"/>
</dbReference>
<dbReference type="InterPro" id="IPR014352">
    <property type="entry name" value="FERM/acyl-CoA-bd_prot_sf"/>
</dbReference>
<dbReference type="InterPro" id="IPR035963">
    <property type="entry name" value="FERM_2"/>
</dbReference>
<dbReference type="InterPro" id="IPR019748">
    <property type="entry name" value="FERM_central"/>
</dbReference>
<dbReference type="InterPro" id="IPR000299">
    <property type="entry name" value="FERM_domain"/>
</dbReference>
<dbReference type="InterPro" id="IPR000048">
    <property type="entry name" value="IQ_motif_EF-hand-BS"/>
</dbReference>
<dbReference type="InterPro" id="IPR002404">
    <property type="entry name" value="IRS_PTB"/>
</dbReference>
<dbReference type="InterPro" id="IPR036961">
    <property type="entry name" value="Kinesin_motor_dom_sf"/>
</dbReference>
<dbReference type="InterPro" id="IPR001609">
    <property type="entry name" value="Myosin_head_motor_dom-like"/>
</dbReference>
<dbReference type="InterPro" id="IPR041793">
    <property type="entry name" value="MyoVII_FERM_C1"/>
</dbReference>
<dbReference type="InterPro" id="IPR041794">
    <property type="entry name" value="MyoVII_FERM_C2"/>
</dbReference>
<dbReference type="InterPro" id="IPR036106">
    <property type="entry name" value="MYSc_Myo7"/>
</dbReference>
<dbReference type="InterPro" id="IPR000857">
    <property type="entry name" value="MyTH4_dom"/>
</dbReference>
<dbReference type="InterPro" id="IPR038185">
    <property type="entry name" value="MyTH4_dom_sf"/>
</dbReference>
<dbReference type="InterPro" id="IPR027417">
    <property type="entry name" value="P-loop_NTPase"/>
</dbReference>
<dbReference type="InterPro" id="IPR011993">
    <property type="entry name" value="PH-like_dom_sf"/>
</dbReference>
<dbReference type="InterPro" id="IPR036028">
    <property type="entry name" value="SH3-like_dom_sf"/>
</dbReference>
<dbReference type="InterPro" id="IPR001452">
    <property type="entry name" value="SH3_domain"/>
</dbReference>
<dbReference type="InterPro" id="IPR029071">
    <property type="entry name" value="Ubiquitin-like_domsf"/>
</dbReference>
<dbReference type="InterPro" id="IPR051567">
    <property type="entry name" value="Unconventional_Myosin_ATPase"/>
</dbReference>
<dbReference type="PANTHER" id="PTHR22692">
    <property type="entry name" value="MYOSIN VII, XV"/>
    <property type="match status" value="1"/>
</dbReference>
<dbReference type="PANTHER" id="PTHR22692:SF24">
    <property type="entry name" value="MYOSIN VIIB"/>
    <property type="match status" value="1"/>
</dbReference>
<dbReference type="Pfam" id="PF21998">
    <property type="entry name" value="FERM_C1_MyoVII"/>
    <property type="match status" value="1"/>
</dbReference>
<dbReference type="Pfam" id="PF00373">
    <property type="entry name" value="FERM_M"/>
    <property type="match status" value="1"/>
</dbReference>
<dbReference type="Pfam" id="PF00612">
    <property type="entry name" value="IQ"/>
    <property type="match status" value="4"/>
</dbReference>
<dbReference type="Pfam" id="PF02174">
    <property type="entry name" value="IRS"/>
    <property type="match status" value="1"/>
</dbReference>
<dbReference type="Pfam" id="PF00063">
    <property type="entry name" value="Myosin_head"/>
    <property type="match status" value="1"/>
</dbReference>
<dbReference type="Pfam" id="PF24123">
    <property type="entry name" value="Myosin_VII_N"/>
    <property type="match status" value="1"/>
</dbReference>
<dbReference type="Pfam" id="PF00784">
    <property type="entry name" value="MyTH4"/>
    <property type="match status" value="2"/>
</dbReference>
<dbReference type="Pfam" id="PF21989">
    <property type="entry name" value="RA_2"/>
    <property type="match status" value="2"/>
</dbReference>
<dbReference type="Pfam" id="PF07653">
    <property type="entry name" value="SH3_2"/>
    <property type="match status" value="1"/>
</dbReference>
<dbReference type="PRINTS" id="PR00193">
    <property type="entry name" value="MYOSINHEAVY"/>
</dbReference>
<dbReference type="SMART" id="SM00295">
    <property type="entry name" value="B41"/>
    <property type="match status" value="2"/>
</dbReference>
<dbReference type="SMART" id="SM00015">
    <property type="entry name" value="IQ"/>
    <property type="match status" value="4"/>
</dbReference>
<dbReference type="SMART" id="SM00242">
    <property type="entry name" value="MYSc"/>
    <property type="match status" value="1"/>
</dbReference>
<dbReference type="SMART" id="SM00139">
    <property type="entry name" value="MyTH4"/>
    <property type="match status" value="2"/>
</dbReference>
<dbReference type="SMART" id="SM00326">
    <property type="entry name" value="SH3"/>
    <property type="match status" value="1"/>
</dbReference>
<dbReference type="SUPFAM" id="SSF52540">
    <property type="entry name" value="P-loop containing nucleoside triphosphate hydrolases"/>
    <property type="match status" value="2"/>
</dbReference>
<dbReference type="SUPFAM" id="SSF50729">
    <property type="entry name" value="PH domain-like"/>
    <property type="match status" value="1"/>
</dbReference>
<dbReference type="SUPFAM" id="SSF47031">
    <property type="entry name" value="Second domain of FERM"/>
    <property type="match status" value="2"/>
</dbReference>
<dbReference type="SUPFAM" id="SSF50044">
    <property type="entry name" value="SH3-domain"/>
    <property type="match status" value="1"/>
</dbReference>
<dbReference type="SUPFAM" id="SSF54236">
    <property type="entry name" value="Ubiquitin-like"/>
    <property type="match status" value="2"/>
</dbReference>
<dbReference type="PROSITE" id="PS50057">
    <property type="entry name" value="FERM_3"/>
    <property type="match status" value="2"/>
</dbReference>
<dbReference type="PROSITE" id="PS50096">
    <property type="entry name" value="IQ"/>
    <property type="match status" value="4"/>
</dbReference>
<dbReference type="PROSITE" id="PS51456">
    <property type="entry name" value="MYOSIN_MOTOR"/>
    <property type="match status" value="1"/>
</dbReference>
<dbReference type="PROSITE" id="PS51016">
    <property type="entry name" value="MYTH4"/>
    <property type="match status" value="2"/>
</dbReference>
<dbReference type="PROSITE" id="PS50002">
    <property type="entry name" value="SH3"/>
    <property type="match status" value="1"/>
</dbReference>
<reference key="1">
    <citation type="journal article" date="2005" name="Nature">
        <title>Generation and annotation of the DNA sequences of human chromosomes 2 and 4.</title>
        <authorList>
            <person name="Hillier L.W."/>
            <person name="Graves T.A."/>
            <person name="Fulton R.S."/>
            <person name="Fulton L.A."/>
            <person name="Pepin K.H."/>
            <person name="Minx P."/>
            <person name="Wagner-McPherson C."/>
            <person name="Layman D."/>
            <person name="Wylie K."/>
            <person name="Sekhon M."/>
            <person name="Becker M.C."/>
            <person name="Fewell G.A."/>
            <person name="Delehaunty K.D."/>
            <person name="Miner T.L."/>
            <person name="Nash W.E."/>
            <person name="Kremitzki C."/>
            <person name="Oddy L."/>
            <person name="Du H."/>
            <person name="Sun H."/>
            <person name="Bradshaw-Cordum H."/>
            <person name="Ali J."/>
            <person name="Carter J."/>
            <person name="Cordes M."/>
            <person name="Harris A."/>
            <person name="Isak A."/>
            <person name="van Brunt A."/>
            <person name="Nguyen C."/>
            <person name="Du F."/>
            <person name="Courtney L."/>
            <person name="Kalicki J."/>
            <person name="Ozersky P."/>
            <person name="Abbott S."/>
            <person name="Armstrong J."/>
            <person name="Belter E.A."/>
            <person name="Caruso L."/>
            <person name="Cedroni M."/>
            <person name="Cotton M."/>
            <person name="Davidson T."/>
            <person name="Desai A."/>
            <person name="Elliott G."/>
            <person name="Erb T."/>
            <person name="Fronick C."/>
            <person name="Gaige T."/>
            <person name="Haakenson W."/>
            <person name="Haglund K."/>
            <person name="Holmes A."/>
            <person name="Harkins R."/>
            <person name="Kim K."/>
            <person name="Kruchowski S.S."/>
            <person name="Strong C.M."/>
            <person name="Grewal N."/>
            <person name="Goyea E."/>
            <person name="Hou S."/>
            <person name="Levy A."/>
            <person name="Martinka S."/>
            <person name="Mead K."/>
            <person name="McLellan M.D."/>
            <person name="Meyer R."/>
            <person name="Randall-Maher J."/>
            <person name="Tomlinson C."/>
            <person name="Dauphin-Kohlberg S."/>
            <person name="Kozlowicz-Reilly A."/>
            <person name="Shah N."/>
            <person name="Swearengen-Shahid S."/>
            <person name="Snider J."/>
            <person name="Strong J.T."/>
            <person name="Thompson J."/>
            <person name="Yoakum M."/>
            <person name="Leonard S."/>
            <person name="Pearman C."/>
            <person name="Trani L."/>
            <person name="Radionenko M."/>
            <person name="Waligorski J.E."/>
            <person name="Wang C."/>
            <person name="Rock S.M."/>
            <person name="Tin-Wollam A.-M."/>
            <person name="Maupin R."/>
            <person name="Latreille P."/>
            <person name="Wendl M.C."/>
            <person name="Yang S.-P."/>
            <person name="Pohl C."/>
            <person name="Wallis J.W."/>
            <person name="Spieth J."/>
            <person name="Bieri T.A."/>
            <person name="Berkowicz N."/>
            <person name="Nelson J.O."/>
            <person name="Osborne J."/>
            <person name="Ding L."/>
            <person name="Meyer R."/>
            <person name="Sabo A."/>
            <person name="Shotland Y."/>
            <person name="Sinha P."/>
            <person name="Wohldmann P.E."/>
            <person name="Cook L.L."/>
            <person name="Hickenbotham M.T."/>
            <person name="Eldred J."/>
            <person name="Williams D."/>
            <person name="Jones T.A."/>
            <person name="She X."/>
            <person name="Ciccarelli F.D."/>
            <person name="Izaurralde E."/>
            <person name="Taylor J."/>
            <person name="Schmutz J."/>
            <person name="Myers R.M."/>
            <person name="Cox D.R."/>
            <person name="Huang X."/>
            <person name="McPherson J.D."/>
            <person name="Mardis E.R."/>
            <person name="Clifton S.W."/>
            <person name="Warren W.C."/>
            <person name="Chinwalla A.T."/>
            <person name="Eddy S.R."/>
            <person name="Marra M.A."/>
            <person name="Ovcharenko I."/>
            <person name="Furey T.S."/>
            <person name="Miller W."/>
            <person name="Eichler E.E."/>
            <person name="Bork P."/>
            <person name="Suyama M."/>
            <person name="Torrents D."/>
            <person name="Waterston R.H."/>
            <person name="Wilson R.K."/>
        </authorList>
    </citation>
    <scope>NUCLEOTIDE SEQUENCE [LARGE SCALE GENOMIC DNA]</scope>
</reference>
<reference key="2">
    <citation type="journal article" date="1994" name="Proc. Natl. Acad. Sci. U.S.A.">
        <title>Identification and overlapping expression of multiple unconventional myosin genes in vertebrate cell types.</title>
        <authorList>
            <person name="Bement W.M."/>
            <person name="Hasson T."/>
            <person name="Wirth J.A."/>
            <person name="Cheney R.E."/>
            <person name="Mooseker M.S."/>
        </authorList>
    </citation>
    <scope>NUCLEOTIDE SEQUENCE [MRNA] OF 166-196 (ISOFORMS 1/2)</scope>
</reference>
<reference key="3">
    <citation type="journal article" date="1994" name="Proc. Natl. Acad. Sci. U.S.A.">
        <authorList>
            <person name="Bement W.M."/>
            <person name="Hasson T."/>
            <person name="Wirth J.A."/>
            <person name="Cheney R.E."/>
            <person name="Mooseker M.S."/>
        </authorList>
    </citation>
    <scope>ERRATUM OF PUBMED:8022818</scope>
</reference>
<reference key="4">
    <citation type="submission" date="2002-01" db="EMBL/GenBank/DDBJ databases">
        <title>The nucleotide sequence of a long cDNA clone isolated from human spleen.</title>
        <authorList>
            <person name="Jikuya H."/>
            <person name="Takano J."/>
            <person name="Nomura N."/>
            <person name="Kikuno R."/>
            <person name="Nagase T."/>
            <person name="Ohara O."/>
        </authorList>
    </citation>
    <scope>NUCLEOTIDE SEQUENCE [LARGE SCALE MRNA] OF 1102-2116 (ISOFORM 2)</scope>
    <source>
        <tissue>Spleen</tissue>
    </source>
</reference>
<reference key="5">
    <citation type="journal article" date="2004" name="Genome Res.">
        <title>The status, quality, and expansion of the NIH full-length cDNA project: the Mammalian Gene Collection (MGC).</title>
        <authorList>
            <consortium name="The MGC Project Team"/>
        </authorList>
    </citation>
    <scope>NUCLEOTIDE SEQUENCE [LARGE SCALE MRNA] OF 1451-2116 (ISOFORM 1)</scope>
    <source>
        <tissue>Testis</tissue>
    </source>
</reference>
<reference key="6">
    <citation type="journal article" date="2014" name="Cell">
        <title>Intestinal brush border assembly driven by protocadherin-based intermicrovillar adhesion.</title>
        <authorList>
            <person name="Crawley S.W."/>
            <person name="Shifrin D.A. Jr."/>
            <person name="Grega-Larson N.E."/>
            <person name="McConnell R.E."/>
            <person name="Benesh A.E."/>
            <person name="Mao S."/>
            <person name="Zheng Y."/>
            <person name="Zheng Q.Y."/>
            <person name="Nam K.T."/>
            <person name="Millis B.A."/>
            <person name="Kachar B."/>
            <person name="Tyska M.J."/>
        </authorList>
    </citation>
    <scope>FUNCTION</scope>
    <scope>SUBCELLULAR LOCATION</scope>
    <scope>IDENTIFICATION OF THE IMAC COMPLEX</scope>
    <scope>INTERACTION WITH CDHR2; CDHR5 AND USH1C</scope>
    <scope>REGION</scope>
</reference>
<reference key="7">
    <citation type="journal article" date="2016" name="Dev. Cell">
        <title>Mechanistic basis of organization of the Harmonin/USH1C-mediated brush border microvilli tip-link complex.</title>
        <authorList>
            <person name="Li J."/>
            <person name="He Y."/>
            <person name="Lu Q."/>
            <person name="Zhang M."/>
        </authorList>
    </citation>
    <scope>INTERACTION WITH USH1C</scope>
    <scope>REGION</scope>
</reference>
<reference key="8">
    <citation type="journal article" date="2016" name="Dev. Cell">
        <title>ANKS4B is essential for intermicrovillar adhesion complex formation.</title>
        <authorList>
            <person name="Crawley S.W."/>
            <person name="Weck M.L."/>
            <person name="Grega-Larson N.E."/>
            <person name="Shifrin D.A. Jr."/>
            <person name="Tyska M.J."/>
        </authorList>
    </citation>
    <scope>FUNCTION</scope>
    <scope>INTERACTION WITH ANKS4B AND USH1C</scope>
    <scope>IDENTIFICATION OF THE IMAC COMPLEX</scope>
</reference>
<reference key="9">
    <citation type="journal article" date="2020" name="J. Biol. Chem.">
        <title>The small EF-hand protein CALML4 functions as a critical myosin light chain within the intermicrovillar adhesion complex.</title>
        <authorList>
            <person name="Choi M.S."/>
            <person name="Graves M.J."/>
            <person name="Matoo S."/>
            <person name="Storad Z.A."/>
            <person name="El Sheikh Idris R.A."/>
            <person name="Weck M.L."/>
            <person name="Smith Z.B."/>
            <person name="Tyska M.J."/>
            <person name="Crawley S.W."/>
        </authorList>
    </citation>
    <scope>INTERACTION WITH CALML4</scope>
    <scope>IDENTIFICATION OF THE IMAC COMPLEX</scope>
    <scope>FUNCTION</scope>
    <scope>SUBCELLULAR LOCATION</scope>
</reference>
<name>MYO7B_HUMAN</name>
<feature type="chain" id="PRO_0000329046" description="Unconventional myosin-VIIb">
    <location>
        <begin position="1"/>
        <end position="2116"/>
    </location>
</feature>
<feature type="domain" description="Myosin motor" evidence="6">
    <location>
        <begin position="65"/>
        <end position="760"/>
    </location>
</feature>
<feature type="domain" description="IQ 1" evidence="3">
    <location>
        <begin position="745"/>
        <end position="765"/>
    </location>
</feature>
<feature type="domain" description="IQ 2" evidence="3">
    <location>
        <begin position="763"/>
        <end position="792"/>
    </location>
</feature>
<feature type="domain" description="IQ 3" evidence="3">
    <location>
        <begin position="786"/>
        <end position="815"/>
    </location>
</feature>
<feature type="domain" description="IQ 4" evidence="3">
    <location>
        <begin position="814"/>
        <end position="834"/>
    </location>
</feature>
<feature type="domain" description="IQ 5" evidence="3">
    <location>
        <begin position="832"/>
        <end position="861"/>
    </location>
</feature>
<feature type="domain" description="IQ 6" evidence="3">
    <location>
        <begin position="855"/>
        <end position="884"/>
    </location>
</feature>
<feature type="domain" description="MyTH4 1" evidence="5">
    <location>
        <begin position="989"/>
        <end position="1192"/>
    </location>
</feature>
<feature type="domain" description="FERM 1" evidence="2">
    <location>
        <begin position="1197"/>
        <end position="1506"/>
    </location>
</feature>
<feature type="domain" description="SH3" evidence="4">
    <location>
        <begin position="1501"/>
        <end position="1567"/>
    </location>
</feature>
<feature type="domain" description="MyTH4 2" evidence="5">
    <location>
        <begin position="1644"/>
        <end position="1793"/>
    </location>
</feature>
<feature type="domain" description="MyTH4 3" evidence="5">
    <location>
        <begin position="1790"/>
        <end position="1896"/>
    </location>
</feature>
<feature type="domain" description="FERM 2" evidence="2">
    <location>
        <begin position="1799"/>
        <end position="2102"/>
    </location>
</feature>
<feature type="region of interest" description="Actin-binding" evidence="6">
    <location>
        <begin position="637"/>
        <end position="659"/>
    </location>
</feature>
<feature type="region of interest" description="Mediates interaction with ANKS4B" evidence="7">
    <location>
        <begin position="916"/>
        <end position="1542"/>
    </location>
</feature>
<feature type="region of interest" description="Mediates interaction with CDHR2, CDHR5 and USH1C" evidence="7 8">
    <location>
        <begin position="1501"/>
        <end position="2116"/>
    </location>
</feature>
<feature type="binding site" evidence="6">
    <location>
        <begin position="158"/>
        <end position="165"/>
    </location>
    <ligand>
        <name>ATP</name>
        <dbReference type="ChEBI" id="CHEBI:30616"/>
    </ligand>
</feature>
<feature type="modified residue" description="Phosphoserine" evidence="1">
    <location>
        <position position="904"/>
    </location>
</feature>
<feature type="modified residue" description="Phosphoserine" evidence="1">
    <location>
        <position position="1371"/>
    </location>
</feature>
<feature type="modified residue" description="Phosphoserine" evidence="1">
    <location>
        <position position="1645"/>
    </location>
</feature>
<feature type="splice variant" id="VSP_032930" description="In isoform 2." evidence="11">
    <original>ISQKEGDFFFDSLREVSDWVKKNKPQKEGAPVTLPYQVYFMRKLWLNISPGKDVNADTILHYHQELPKYLRGFHKCSREDAIHLAGLIYKAQFNNDRSQLASVPKIL</original>
    <variation>GRAGAGQTVGGRAVSEALGAACGGLSLPGAPMLDQAAGTEVGGVLEQSQLHTPIAHAQPTPAQHPGRRRPLDQNPAGSQEDSPRKPPNFPVPSPSPGHQPEGGRLLL</variation>
    <location>
        <begin position="1851"/>
        <end position="1957"/>
    </location>
</feature>
<feature type="splice variant" id="VSP_032931" description="In isoform 2." evidence="11">
    <location>
        <begin position="1958"/>
        <end position="2116"/>
    </location>
</feature>
<feature type="sequence variant" id="VAR_042626" description="In dbSNP:rs2404991.">
    <original>G</original>
    <variation>S</variation>
    <location>
        <position position="21"/>
    </location>
</feature>
<feature type="sequence variant" id="VAR_042627" description="In dbSNP:rs2245408.">
    <original>R</original>
    <variation>Q</variation>
    <location>
        <position position="1264"/>
    </location>
</feature>
<feature type="sequence variant" id="VAR_042628" description="In dbSNP:rs13025959.">
    <original>E</original>
    <variation>D</variation>
    <location>
        <position position="1647"/>
    </location>
</feature>
<feature type="sequence variant" id="VAR_042629" description="In dbSNP:rs11686946.">
    <original>Q</original>
    <variation>R</variation>
    <location>
        <position position="2105"/>
    </location>
</feature>
<feature type="sequence conflict" description="In Ref. 2; AAA20910." evidence="12" ref="2">
    <original>H</original>
    <variation>D</variation>
    <location>
        <position position="182"/>
    </location>
</feature>
<feature type="sequence conflict" description="In Ref. 4; BAB85009." evidence="12" ref="4">
    <original>LRPSL</original>
    <variation>WSVSF</variation>
    <location>
        <begin position="1102"/>
        <end position="1106"/>
    </location>
</feature>
<feature type="helix" evidence="16">
    <location>
        <begin position="1612"/>
        <end position="1618"/>
    </location>
</feature>
<feature type="helix" evidence="16">
    <location>
        <begin position="1655"/>
        <end position="1658"/>
    </location>
</feature>
<feature type="helix" evidence="16">
    <location>
        <begin position="1661"/>
        <end position="1663"/>
    </location>
</feature>
<feature type="helix" evidence="16">
    <location>
        <begin position="1664"/>
        <end position="1677"/>
    </location>
</feature>
<feature type="helix" evidence="16">
    <location>
        <begin position="1689"/>
        <end position="1702"/>
    </location>
</feature>
<feature type="helix" evidence="16">
    <location>
        <begin position="1705"/>
        <end position="1717"/>
    </location>
</feature>
<feature type="helix" evidence="16">
    <location>
        <begin position="1724"/>
        <end position="1738"/>
    </location>
</feature>
<feature type="turn" evidence="16">
    <location>
        <begin position="1745"/>
        <end position="1747"/>
    </location>
</feature>
<feature type="helix" evidence="16">
    <location>
        <begin position="1748"/>
        <end position="1756"/>
    </location>
</feature>
<feature type="turn" evidence="16">
    <location>
        <begin position="1757"/>
        <end position="1760"/>
    </location>
</feature>
<feature type="helix" evidence="16">
    <location>
        <begin position="1764"/>
        <end position="1777"/>
    </location>
</feature>
<feature type="helix" evidence="16">
    <location>
        <begin position="1786"/>
        <end position="1793"/>
    </location>
</feature>
<feature type="strand" evidence="16">
    <location>
        <begin position="1799"/>
        <end position="1805"/>
    </location>
</feature>
<feature type="turn" evidence="16">
    <location>
        <begin position="1806"/>
        <end position="1808"/>
    </location>
</feature>
<feature type="strand" evidence="16">
    <location>
        <begin position="1809"/>
        <end position="1815"/>
    </location>
</feature>
<feature type="helix" evidence="16">
    <location>
        <begin position="1821"/>
        <end position="1832"/>
    </location>
</feature>
<feature type="strand" evidence="16">
    <location>
        <begin position="1840"/>
        <end position="1846"/>
    </location>
</feature>
<feature type="strand" evidence="16">
    <location>
        <begin position="1849"/>
        <end position="1852"/>
    </location>
</feature>
<feature type="helix" evidence="16">
    <location>
        <begin position="1859"/>
        <end position="1873"/>
    </location>
</feature>
<feature type="strand" evidence="16">
    <location>
        <begin position="1886"/>
        <end position="1892"/>
    </location>
</feature>
<feature type="helix" evidence="16">
    <location>
        <begin position="1904"/>
        <end position="1909"/>
    </location>
</feature>
<feature type="helix" evidence="16">
    <location>
        <begin position="1911"/>
        <end position="1920"/>
    </location>
</feature>
<feature type="helix" evidence="16">
    <location>
        <begin position="1928"/>
        <end position="1943"/>
    </location>
</feature>
<feature type="helix" evidence="16">
    <location>
        <begin position="1947"/>
        <end position="1951"/>
    </location>
</feature>
<feature type="helix" evidence="16">
    <location>
        <begin position="1953"/>
        <end position="1956"/>
    </location>
</feature>
<feature type="helix" evidence="16">
    <location>
        <begin position="1957"/>
        <end position="1959"/>
    </location>
</feature>
<feature type="turn" evidence="16">
    <location>
        <begin position="1963"/>
        <end position="1965"/>
    </location>
</feature>
<feature type="helix" evidence="16">
    <location>
        <begin position="1966"/>
        <end position="1968"/>
    </location>
</feature>
<feature type="helix" evidence="16">
    <location>
        <begin position="1971"/>
        <end position="1982"/>
    </location>
</feature>
<feature type="helix" evidence="16">
    <location>
        <begin position="1983"/>
        <end position="1985"/>
    </location>
</feature>
<feature type="helix" evidence="16">
    <location>
        <begin position="1990"/>
        <end position="2001"/>
    </location>
</feature>
<feature type="turn" evidence="16">
    <location>
        <begin position="2005"/>
        <end position="2008"/>
    </location>
</feature>
<feature type="strand" evidence="16">
    <location>
        <begin position="2010"/>
        <end position="2016"/>
    </location>
</feature>
<feature type="strand" evidence="16">
    <location>
        <begin position="2024"/>
        <end position="2031"/>
    </location>
</feature>
<feature type="strand" evidence="16">
    <location>
        <begin position="2034"/>
        <end position="2038"/>
    </location>
</feature>
<feature type="turn" evidence="16">
    <location>
        <begin position="2040"/>
        <end position="2042"/>
    </location>
</feature>
<feature type="strand" evidence="16">
    <location>
        <begin position="2045"/>
        <end position="2049"/>
    </location>
</feature>
<feature type="helix" evidence="16">
    <location>
        <begin position="2051"/>
        <end position="2053"/>
    </location>
</feature>
<feature type="strand" evidence="16">
    <location>
        <begin position="2054"/>
        <end position="2059"/>
    </location>
</feature>
<feature type="strand" evidence="16">
    <location>
        <begin position="2061"/>
        <end position="2068"/>
    </location>
</feature>
<feature type="strand" evidence="16">
    <location>
        <begin position="2075"/>
        <end position="2080"/>
    </location>
</feature>
<feature type="helix" evidence="16">
    <location>
        <begin position="2084"/>
        <end position="2099"/>
    </location>
</feature>
<organism>
    <name type="scientific">Homo sapiens</name>
    <name type="common">Human</name>
    <dbReference type="NCBI Taxonomy" id="9606"/>
    <lineage>
        <taxon>Eukaryota</taxon>
        <taxon>Metazoa</taxon>
        <taxon>Chordata</taxon>
        <taxon>Craniata</taxon>
        <taxon>Vertebrata</taxon>
        <taxon>Euteleostomi</taxon>
        <taxon>Mammalia</taxon>
        <taxon>Eutheria</taxon>
        <taxon>Euarchontoglires</taxon>
        <taxon>Primates</taxon>
        <taxon>Haplorrhini</taxon>
        <taxon>Catarrhini</taxon>
        <taxon>Hominidae</taxon>
        <taxon>Homo</taxon>
    </lineage>
</organism>
<evidence type="ECO:0000250" key="1">
    <source>
        <dbReference type="UniProtKB" id="Q99MZ6"/>
    </source>
</evidence>
<evidence type="ECO:0000255" key="2">
    <source>
        <dbReference type="PROSITE-ProRule" id="PRU00084"/>
    </source>
</evidence>
<evidence type="ECO:0000255" key="3">
    <source>
        <dbReference type="PROSITE-ProRule" id="PRU00116"/>
    </source>
</evidence>
<evidence type="ECO:0000255" key="4">
    <source>
        <dbReference type="PROSITE-ProRule" id="PRU00192"/>
    </source>
</evidence>
<evidence type="ECO:0000255" key="5">
    <source>
        <dbReference type="PROSITE-ProRule" id="PRU00359"/>
    </source>
</evidence>
<evidence type="ECO:0000255" key="6">
    <source>
        <dbReference type="PROSITE-ProRule" id="PRU00782"/>
    </source>
</evidence>
<evidence type="ECO:0000269" key="7">
    <source>
    </source>
</evidence>
<evidence type="ECO:0000269" key="8">
    <source>
    </source>
</evidence>
<evidence type="ECO:0000269" key="9">
    <source>
    </source>
</evidence>
<evidence type="ECO:0000269" key="10">
    <source>
    </source>
</evidence>
<evidence type="ECO:0000303" key="11">
    <source ref="4"/>
</evidence>
<evidence type="ECO:0000305" key="12"/>
<evidence type="ECO:0000305" key="13">
    <source>
    </source>
</evidence>
<evidence type="ECO:0000305" key="14">
    <source>
    </source>
</evidence>
<evidence type="ECO:0000312" key="15">
    <source>
        <dbReference type="HGNC" id="HGNC:7607"/>
    </source>
</evidence>
<evidence type="ECO:0007829" key="16">
    <source>
        <dbReference type="PDB" id="5XBF"/>
    </source>
</evidence>
<protein>
    <recommendedName>
        <fullName evidence="12">Unconventional myosin-VIIb</fullName>
    </recommendedName>
</protein>
<accession>Q6PIF6</accession>
<accession>Q14786</accession>
<accession>Q8TEE1</accession>
<keyword id="KW-0002">3D-structure</keyword>
<keyword id="KW-0009">Actin-binding</keyword>
<keyword id="KW-0025">Alternative splicing</keyword>
<keyword id="KW-0067">ATP-binding</keyword>
<keyword id="KW-0966">Cell projection</keyword>
<keyword id="KW-0963">Cytoplasm</keyword>
<keyword id="KW-0206">Cytoskeleton</keyword>
<keyword id="KW-0221">Differentiation</keyword>
<keyword id="KW-0505">Motor protein</keyword>
<keyword id="KW-0518">Myosin</keyword>
<keyword id="KW-0547">Nucleotide-binding</keyword>
<keyword id="KW-0597">Phosphoprotein</keyword>
<keyword id="KW-1267">Proteomics identification</keyword>
<keyword id="KW-1185">Reference proteome</keyword>
<keyword id="KW-0677">Repeat</keyword>
<keyword id="KW-0728">SH3 domain</keyword>
<proteinExistence type="evidence at protein level"/>
<sequence length="2116" mass="241599">MSGFRLGDHVWLEPPSTHKTGVAIGGIIKEAKPGKVLVEDDEGKEHWIRAEDFGVLSPMHPNSVQGVDDMIRLGDLNEAGMVHNLLIRYQQHKIYTYTGSILVAVNPFQVLPLYTLEQVQLYYSRHMGELPPHVFAIANNCYFSMKRNKRDQCCIISGESGAGKTETTKLILQFLATISGQHSWIEQQVLEANPILEAFGNAKTIRNDNSSRFGKYIDIYFNPSGVIEGARIEQFLLEKSRVCRQAPEERNYHIFYCMLMGVSAEDKQLLSLGTPSEYHYLTMGNCTSCEGLNDAKDYAHIRSAMKILQFSDSESWDVIKLLAAILHLGNVGFMASVFENLDASDVMETPAFPTVMKLLEVQHQELRDCLIKHTILIRGEFVTRSLNIAQAADRRDAFVKGIYGHLFLWIVKKINAAIFTPPAQDPKNVRRAIGLLDIFGFENFENNSFEQLCINFANEHLQQFFVQHVFTMEQEEYRSENISWDYIHYTDNRPTLDLLALKPMSIISLLDEESRFPQGTDLTMLQKLNSVHANNKAFLQPKNIHDARFGIAHFAGEVYYQAEGFLEKNRDVLSTDILTLVYSSKNKFLREIFNLELAETKLGHGTIRQAKAGNHLFKSADSNKRPSTLGSQFKQSLDQLMKILTNCQPYFIRCIKPNEYKKPLLFDRELCLRQLRYSGMMETVHIRKSGFPIRYTFEEFSQRFGVLLPNAMRMQLQGKLRQMTLGITDVWLRTDKDWKAGKTKIFLRDHQDTLLEVQRSQVLDRAALSIQKVLRGYRYRKEFLRQRRAAVTLQAWWRGYCNRRNFKLILVGFERLQAIARSQPLARQYQAMRQRTVQLQALCRGYLVRQQVQAKRRAVVVIQAHARGMAARRNFQQRKANAPLVIPAEGQKSQGALPAKKRRSIYDTVTDTEMVEKVFGFLPAMIGGQEGQASPHFEDLESKTQKLLEVDLDTVPMAEEPEEDVDGLAEYTFPKFAVTYFQKSASHTHIRRPLRYPLLYHEDDTDCLAALVIWNVILRFMGDLPEPVLYARSSQQGSSVMRQIHDTLGREHGAQVPQHSRSAQVASQLNIGEEALEPDGLGADRPMSNLEKVHFIVGYAILRPSLRDEIYCQICKQLSENFKTSSLARGWILLSLCLGCFPPSERFMKYLLNFIGQGPATYGPFCAERLRRTYANGVRAEPPTWLELQAVKSKKHIPIQVILATGESLTVPVDSASTSREMCMHIAHKQGLSDHLGFSLQVAVYDKFWSLGSGRDHMMDAIARCEQMAQERGESQRQSPWRIYFRKEFFTPWHDSREDPVSTELIYRQVLRGVWSGEYSFEKEEELVELLARHCYVQLGASAESKAVQELLPSCIPHKLYRTKPPDRWASLVTAACAKAPYTQKQVTPLAVREQVVDAARLQWPLLFSRLFEVITLSGPRLPKTQLILAVNWKGLCFLDQQEKMLLELSFPEVMGLATNREAQGGQRLLLSTMHEEYEFVSPSSVAIAELVALFLEGLKERSIFAMALQDRKATDDTTLLAFKKGDLLVLTKKQGLLASENWTLGQNDRTGKTGLVPMACLYTIPTVTKPSAQLLSLLAMSPEKRKLAAQEGQFTEPRPEEPPKEKLHTLEEFSYEFFRAPEKDMVSMAVLPLARARGHLWAYSCEPLRQPLLKRVHANVDLWDIACQIFVAILRYMGDYPSRQAWPTLELTDQIFTLALQHPALQDEVYCQILKQLTHNSNRHSEERGWQLLWLCTGLFPPSKGLLPHAQKFIDTRRGKLLAPDCSRRIQKVLRTGPRKQPPHQVEVEAAEQNVSRICHKIYFPNDTSEMLEVVANTRVRDVCDSIATRLQLASWEGCSLFIKISDKVISQKEGDFFFDSLREVSDWVKKNKPQKEGAPVTLPYQVYFMRKLWLNISPGKDVNADTILHYHQELPKYLRGFHKCSREDAIHLAGLIYKAQFNNDRSQLASVPKILRELVPENLTRLMSSEEWKKSILLAYDKHKDKTVEEAKVAFLKWICRWPTFGSAFFEVKQTSEPSYPDVILIAINRHGVLLIHPKTKDLLTTYPFTKISSWSSGSTYFHMALGSLGRGSRLLCETSLGYKMDDLLTSYVQQLLSAMNKQRGSKAPALAST</sequence>
<gene>
    <name evidence="15" type="primary">MYO7B</name>
</gene>